<gene>
    <name evidence="2" type="primary">deoD</name>
    <name type="ordered locus">ESA_03367</name>
</gene>
<comment type="function">
    <text evidence="2">Catalyzes the reversible phosphorolytic breakdown of the N-glycosidic bond in the beta-(deoxy)ribonucleoside molecules, with the formation of the corresponding free purine bases and pentose-1-phosphate.</text>
</comment>
<comment type="catalytic activity">
    <reaction evidence="2">
        <text>a purine D-ribonucleoside + phosphate = a purine nucleobase + alpha-D-ribose 1-phosphate</text>
        <dbReference type="Rhea" id="RHEA:19805"/>
        <dbReference type="ChEBI" id="CHEBI:26386"/>
        <dbReference type="ChEBI" id="CHEBI:43474"/>
        <dbReference type="ChEBI" id="CHEBI:57720"/>
        <dbReference type="ChEBI" id="CHEBI:142355"/>
        <dbReference type="EC" id="2.4.2.1"/>
    </reaction>
</comment>
<comment type="catalytic activity">
    <reaction evidence="2">
        <text>a purine 2'-deoxy-D-ribonucleoside + phosphate = a purine nucleobase + 2-deoxy-alpha-D-ribose 1-phosphate</text>
        <dbReference type="Rhea" id="RHEA:36431"/>
        <dbReference type="ChEBI" id="CHEBI:26386"/>
        <dbReference type="ChEBI" id="CHEBI:43474"/>
        <dbReference type="ChEBI" id="CHEBI:57259"/>
        <dbReference type="ChEBI" id="CHEBI:142361"/>
        <dbReference type="EC" id="2.4.2.1"/>
    </reaction>
</comment>
<comment type="subunit">
    <text evidence="2">Homohexamer; trimer of homodimers.</text>
</comment>
<comment type="similarity">
    <text evidence="2">Belongs to the PNP/UDP phosphorylase family.</text>
</comment>
<protein>
    <recommendedName>
        <fullName evidence="2">Purine nucleoside phosphorylase DeoD-type</fullName>
        <shortName evidence="2">PNP</shortName>
        <ecNumber evidence="2">2.4.2.1</ecNumber>
    </recommendedName>
</protein>
<feature type="chain" id="PRO_1000069629" description="Purine nucleoside phosphorylase DeoD-type">
    <location>
        <begin position="1"/>
        <end position="239"/>
    </location>
</feature>
<feature type="active site" description="Proton donor" evidence="2">
    <location>
        <position position="205"/>
    </location>
</feature>
<feature type="binding site" evidence="1">
    <location>
        <position position="5"/>
    </location>
    <ligand>
        <name>a purine D-ribonucleoside</name>
        <dbReference type="ChEBI" id="CHEBI:142355"/>
        <note>ligand shared between dimeric partners</note>
    </ligand>
</feature>
<feature type="binding site" description="in other chain" evidence="1">
    <location>
        <position position="21"/>
    </location>
    <ligand>
        <name>phosphate</name>
        <dbReference type="ChEBI" id="CHEBI:43474"/>
        <note>ligand shared between dimeric partners</note>
    </ligand>
</feature>
<feature type="binding site" description="in other chain" evidence="1">
    <location>
        <position position="25"/>
    </location>
    <ligand>
        <name>phosphate</name>
        <dbReference type="ChEBI" id="CHEBI:43474"/>
        <note>ligand shared between dimeric partners</note>
    </ligand>
</feature>
<feature type="binding site" evidence="1">
    <location>
        <position position="44"/>
    </location>
    <ligand>
        <name>phosphate</name>
        <dbReference type="ChEBI" id="CHEBI:43474"/>
        <note>ligand shared between dimeric partners</note>
    </ligand>
</feature>
<feature type="binding site" description="in other chain" evidence="1">
    <location>
        <begin position="88"/>
        <end position="91"/>
    </location>
    <ligand>
        <name>phosphate</name>
        <dbReference type="ChEBI" id="CHEBI:43474"/>
        <note>ligand shared between dimeric partners</note>
    </ligand>
</feature>
<feature type="binding site" description="in other chain" evidence="1">
    <location>
        <begin position="180"/>
        <end position="182"/>
    </location>
    <ligand>
        <name>a purine D-ribonucleoside</name>
        <dbReference type="ChEBI" id="CHEBI:142355"/>
        <note>ligand shared between dimeric partners</note>
    </ligand>
</feature>
<feature type="binding site" description="in other chain" evidence="1">
    <location>
        <begin position="204"/>
        <end position="205"/>
    </location>
    <ligand>
        <name>a purine D-ribonucleoside</name>
        <dbReference type="ChEBI" id="CHEBI:142355"/>
        <note>ligand shared between dimeric partners</note>
    </ligand>
</feature>
<feature type="site" description="Important for catalytic activity" evidence="2">
    <location>
        <position position="218"/>
    </location>
</feature>
<reference key="1">
    <citation type="journal article" date="2010" name="PLoS ONE">
        <title>Genome sequence of Cronobacter sakazakii BAA-894 and comparative genomic hybridization analysis with other Cronobacter species.</title>
        <authorList>
            <person name="Kucerova E."/>
            <person name="Clifton S.W."/>
            <person name="Xia X.Q."/>
            <person name="Long F."/>
            <person name="Porwollik S."/>
            <person name="Fulton L."/>
            <person name="Fronick C."/>
            <person name="Minx P."/>
            <person name="Kyung K."/>
            <person name="Warren W."/>
            <person name="Fulton R."/>
            <person name="Feng D."/>
            <person name="Wollam A."/>
            <person name="Shah N."/>
            <person name="Bhonagiri V."/>
            <person name="Nash W.E."/>
            <person name="Hallsworth-Pepin K."/>
            <person name="Wilson R.K."/>
            <person name="McClelland M."/>
            <person name="Forsythe S.J."/>
        </authorList>
    </citation>
    <scope>NUCLEOTIDE SEQUENCE [LARGE SCALE GENOMIC DNA]</scope>
    <source>
        <strain>ATCC BAA-894</strain>
    </source>
</reference>
<evidence type="ECO:0000250" key="1">
    <source>
        <dbReference type="UniProtKB" id="P50389"/>
    </source>
</evidence>
<evidence type="ECO:0000255" key="2">
    <source>
        <dbReference type="HAMAP-Rule" id="MF_01627"/>
    </source>
</evidence>
<name>DEOD_CROS8</name>
<organism>
    <name type="scientific">Cronobacter sakazakii (strain ATCC BAA-894)</name>
    <name type="common">Enterobacter sakazakii</name>
    <dbReference type="NCBI Taxonomy" id="290339"/>
    <lineage>
        <taxon>Bacteria</taxon>
        <taxon>Pseudomonadati</taxon>
        <taxon>Pseudomonadota</taxon>
        <taxon>Gammaproteobacteria</taxon>
        <taxon>Enterobacterales</taxon>
        <taxon>Enterobacteriaceae</taxon>
        <taxon>Cronobacter</taxon>
    </lineage>
</organism>
<dbReference type="EC" id="2.4.2.1" evidence="2"/>
<dbReference type="EMBL" id="CP000783">
    <property type="protein sequence ID" value="ABU78588.1"/>
    <property type="molecule type" value="Genomic_DNA"/>
</dbReference>
<dbReference type="RefSeq" id="WP_004386471.1">
    <property type="nucleotide sequence ID" value="NC_009778.1"/>
</dbReference>
<dbReference type="SMR" id="A7MIG7"/>
<dbReference type="GeneID" id="45716922"/>
<dbReference type="KEGG" id="esa:ESA_03367"/>
<dbReference type="HOGENOM" id="CLU_068457_2_0_6"/>
<dbReference type="Proteomes" id="UP000000260">
    <property type="component" value="Chromosome"/>
</dbReference>
<dbReference type="GO" id="GO:0005829">
    <property type="term" value="C:cytosol"/>
    <property type="evidence" value="ECO:0007669"/>
    <property type="project" value="TreeGrafter"/>
</dbReference>
<dbReference type="GO" id="GO:0004731">
    <property type="term" value="F:purine-nucleoside phosphorylase activity"/>
    <property type="evidence" value="ECO:0007669"/>
    <property type="project" value="UniProtKB-UniRule"/>
</dbReference>
<dbReference type="GO" id="GO:0006152">
    <property type="term" value="P:purine nucleoside catabolic process"/>
    <property type="evidence" value="ECO:0007669"/>
    <property type="project" value="TreeGrafter"/>
</dbReference>
<dbReference type="CDD" id="cd09006">
    <property type="entry name" value="PNP_EcPNPI-like"/>
    <property type="match status" value="1"/>
</dbReference>
<dbReference type="FunFam" id="3.40.50.1580:FF:000002">
    <property type="entry name" value="Purine nucleoside phosphorylase DeoD-type"/>
    <property type="match status" value="1"/>
</dbReference>
<dbReference type="Gene3D" id="3.40.50.1580">
    <property type="entry name" value="Nucleoside phosphorylase domain"/>
    <property type="match status" value="1"/>
</dbReference>
<dbReference type="HAMAP" id="MF_01627">
    <property type="entry name" value="Pur_nucleosid_phosp"/>
    <property type="match status" value="1"/>
</dbReference>
<dbReference type="InterPro" id="IPR004402">
    <property type="entry name" value="DeoD-type"/>
</dbReference>
<dbReference type="InterPro" id="IPR018016">
    <property type="entry name" value="Nucleoside_phosphorylase_CS"/>
</dbReference>
<dbReference type="InterPro" id="IPR000845">
    <property type="entry name" value="Nucleoside_phosphorylase_d"/>
</dbReference>
<dbReference type="InterPro" id="IPR035994">
    <property type="entry name" value="Nucleoside_phosphorylase_sf"/>
</dbReference>
<dbReference type="NCBIfam" id="TIGR00107">
    <property type="entry name" value="deoD"/>
    <property type="match status" value="1"/>
</dbReference>
<dbReference type="NCBIfam" id="NF004489">
    <property type="entry name" value="PRK05819.1"/>
    <property type="match status" value="1"/>
</dbReference>
<dbReference type="NCBIfam" id="NF009914">
    <property type="entry name" value="PRK13374.1"/>
    <property type="match status" value="1"/>
</dbReference>
<dbReference type="PANTHER" id="PTHR43691:SF2">
    <property type="entry name" value="PURINE NUCLEOSIDE PHOSPHORYLASE DEOD-TYPE"/>
    <property type="match status" value="1"/>
</dbReference>
<dbReference type="PANTHER" id="PTHR43691">
    <property type="entry name" value="URIDINE PHOSPHORYLASE"/>
    <property type="match status" value="1"/>
</dbReference>
<dbReference type="Pfam" id="PF01048">
    <property type="entry name" value="PNP_UDP_1"/>
    <property type="match status" value="1"/>
</dbReference>
<dbReference type="SUPFAM" id="SSF53167">
    <property type="entry name" value="Purine and uridine phosphorylases"/>
    <property type="match status" value="1"/>
</dbReference>
<dbReference type="PROSITE" id="PS01232">
    <property type="entry name" value="PNP_UDP_1"/>
    <property type="match status" value="1"/>
</dbReference>
<accession>A7MIG7</accession>
<proteinExistence type="inferred from homology"/>
<sequence>MATPHINAEMGDFADVVLMPGDPLRAKHIAETFLEDVREVNNVRGMLGFTGTYKGRKISVMGHGMGIPSCSIYTKELITDFGVKKIIRVGSCGAVRADVKLRDVVIGMGACTDSKVNRLRFKDHDFAAIADFDMVRNAVDAAKALGVEARVGNIFSADLFYTPDPSMFDVMEKYGILGVEMEAAGIYGVAAEFGAKALTICTVSDHIRTHEQTTAAERQTTFNDMIKIALESVLLGDKE</sequence>
<keyword id="KW-0328">Glycosyltransferase</keyword>
<keyword id="KW-1185">Reference proteome</keyword>
<keyword id="KW-0808">Transferase</keyword>